<evidence type="ECO:0000255" key="1">
    <source>
        <dbReference type="HAMAP-Rule" id="MF_00344"/>
    </source>
</evidence>
<proteinExistence type="inferred from homology"/>
<sequence>MSDLYAHRILILDFGSQYTQLIARRVREAGVYCEIHPYDMAESTLRDFAPRGIILSGGPASTVGETAPRLSPLIFELGVPLLGICYGMQVMAAQLGGRVEVSAQREYGYAQVYVHGHSRLLQNIEDHTTAGGEALLDVWMSHGDRVIGLPEGFKRIAATAHAPLAGMADEKRRFYGFQFHPEVTHTRQGIRILERFIYDICGCEALWEPRHIIAKSIENIRTKVGADTVLLGLSGGVDSSVAAALLHKAIGDQLICVFVDNGLLRQGEADQVMATFARHLGIKVIHISAETRFLEALAGVIDPEAKRKIIGRVFIEVFEEEAAKLPNAQWLAQGTIYPDVIESAGGKTGKAQVIKSHHNVGGLPEELNLKLLEPLRELFKDEVRQLGTELGLPFELVYRHPFPGPGLGVRILGEVKKEYADLLRLADAIFIEELHAHDWYDKVSQAFAVFLPVKSVGVMGDGRCYDFVVALRAVESVDFMTARWAHLPYDFLDHVSRRIINEVAGISRVTYDISGKPPATIEWE</sequence>
<feature type="chain" id="PRO_0000229447" description="GMP synthase [glutamine-hydrolyzing]">
    <location>
        <begin position="1"/>
        <end position="524"/>
    </location>
</feature>
<feature type="domain" description="Glutamine amidotransferase type-1" evidence="1">
    <location>
        <begin position="8"/>
        <end position="206"/>
    </location>
</feature>
<feature type="domain" description="GMPS ATP-PPase" evidence="1">
    <location>
        <begin position="207"/>
        <end position="399"/>
    </location>
</feature>
<feature type="active site" description="Nucleophile" evidence="1">
    <location>
        <position position="85"/>
    </location>
</feature>
<feature type="active site" evidence="1">
    <location>
        <position position="180"/>
    </location>
</feature>
<feature type="active site" evidence="1">
    <location>
        <position position="182"/>
    </location>
</feature>
<feature type="binding site" evidence="1">
    <location>
        <begin position="234"/>
        <end position="240"/>
    </location>
    <ligand>
        <name>ATP</name>
        <dbReference type="ChEBI" id="CHEBI:30616"/>
    </ligand>
</feature>
<reference key="1">
    <citation type="journal article" date="2006" name="Appl. Environ. Microbiol.">
        <title>Complete genome sequence of the marine, chemolithoautotrophic, ammonia-oxidizing bacterium Nitrosococcus oceani ATCC 19707.</title>
        <authorList>
            <person name="Klotz M.G."/>
            <person name="Arp D.J."/>
            <person name="Chain P.S.G."/>
            <person name="El-Sheikh A.F."/>
            <person name="Hauser L.J."/>
            <person name="Hommes N.G."/>
            <person name="Larimer F.W."/>
            <person name="Malfatti S.A."/>
            <person name="Norton J.M."/>
            <person name="Poret-Peterson A.T."/>
            <person name="Vergez L.M."/>
            <person name="Ward B.B."/>
        </authorList>
    </citation>
    <scope>NUCLEOTIDE SEQUENCE [LARGE SCALE GENOMIC DNA]</scope>
    <source>
        <strain>ATCC 19707 / BCRC 17464 / JCM 30415 / NCIMB 11848 / C-107</strain>
    </source>
</reference>
<comment type="function">
    <text evidence="1">Catalyzes the synthesis of GMP from XMP.</text>
</comment>
<comment type="catalytic activity">
    <reaction evidence="1">
        <text>XMP + L-glutamine + ATP + H2O = GMP + L-glutamate + AMP + diphosphate + 2 H(+)</text>
        <dbReference type="Rhea" id="RHEA:11680"/>
        <dbReference type="ChEBI" id="CHEBI:15377"/>
        <dbReference type="ChEBI" id="CHEBI:15378"/>
        <dbReference type="ChEBI" id="CHEBI:29985"/>
        <dbReference type="ChEBI" id="CHEBI:30616"/>
        <dbReference type="ChEBI" id="CHEBI:33019"/>
        <dbReference type="ChEBI" id="CHEBI:57464"/>
        <dbReference type="ChEBI" id="CHEBI:58115"/>
        <dbReference type="ChEBI" id="CHEBI:58359"/>
        <dbReference type="ChEBI" id="CHEBI:456215"/>
        <dbReference type="EC" id="6.3.5.2"/>
    </reaction>
</comment>
<comment type="pathway">
    <text evidence="1">Purine metabolism; GMP biosynthesis; GMP from XMP (L-Gln route): step 1/1.</text>
</comment>
<comment type="subunit">
    <text evidence="1">Homodimer.</text>
</comment>
<keyword id="KW-0067">ATP-binding</keyword>
<keyword id="KW-0315">Glutamine amidotransferase</keyword>
<keyword id="KW-0332">GMP biosynthesis</keyword>
<keyword id="KW-0436">Ligase</keyword>
<keyword id="KW-0547">Nucleotide-binding</keyword>
<keyword id="KW-0658">Purine biosynthesis</keyword>
<keyword id="KW-1185">Reference proteome</keyword>
<accession>Q3JDG3</accession>
<protein>
    <recommendedName>
        <fullName evidence="1">GMP synthase [glutamine-hydrolyzing]</fullName>
        <ecNumber evidence="1">6.3.5.2</ecNumber>
    </recommendedName>
    <alternativeName>
        <fullName evidence="1">GMP synthetase</fullName>
    </alternativeName>
    <alternativeName>
        <fullName evidence="1">Glutamine amidotransferase</fullName>
    </alternativeName>
</protein>
<gene>
    <name evidence="1" type="primary">guaA</name>
    <name type="ordered locus">Noc_0614</name>
</gene>
<dbReference type="EC" id="6.3.5.2" evidence="1"/>
<dbReference type="EMBL" id="CP000127">
    <property type="protein sequence ID" value="ABA57133.1"/>
    <property type="molecule type" value="Genomic_DNA"/>
</dbReference>
<dbReference type="RefSeq" id="WP_002812022.1">
    <property type="nucleotide sequence ID" value="NC_007484.1"/>
</dbReference>
<dbReference type="SMR" id="Q3JDG3"/>
<dbReference type="FunCoup" id="Q3JDG3">
    <property type="interactions" value="564"/>
</dbReference>
<dbReference type="STRING" id="323261.Noc_0614"/>
<dbReference type="KEGG" id="noc:Noc_0614"/>
<dbReference type="eggNOG" id="COG0518">
    <property type="taxonomic scope" value="Bacteria"/>
</dbReference>
<dbReference type="eggNOG" id="COG0519">
    <property type="taxonomic scope" value="Bacteria"/>
</dbReference>
<dbReference type="HOGENOM" id="CLU_014340_0_5_6"/>
<dbReference type="InParanoid" id="Q3JDG3"/>
<dbReference type="UniPathway" id="UPA00189">
    <property type="reaction ID" value="UER00296"/>
</dbReference>
<dbReference type="Proteomes" id="UP000006838">
    <property type="component" value="Chromosome"/>
</dbReference>
<dbReference type="GO" id="GO:0005829">
    <property type="term" value="C:cytosol"/>
    <property type="evidence" value="ECO:0007669"/>
    <property type="project" value="TreeGrafter"/>
</dbReference>
<dbReference type="GO" id="GO:0005524">
    <property type="term" value="F:ATP binding"/>
    <property type="evidence" value="ECO:0007669"/>
    <property type="project" value="UniProtKB-UniRule"/>
</dbReference>
<dbReference type="GO" id="GO:0003921">
    <property type="term" value="F:GMP synthase activity"/>
    <property type="evidence" value="ECO:0007669"/>
    <property type="project" value="InterPro"/>
</dbReference>
<dbReference type="CDD" id="cd01742">
    <property type="entry name" value="GATase1_GMP_Synthase"/>
    <property type="match status" value="1"/>
</dbReference>
<dbReference type="CDD" id="cd01997">
    <property type="entry name" value="GMP_synthase_C"/>
    <property type="match status" value="1"/>
</dbReference>
<dbReference type="FunFam" id="3.30.300.10:FF:000002">
    <property type="entry name" value="GMP synthase [glutamine-hydrolyzing]"/>
    <property type="match status" value="1"/>
</dbReference>
<dbReference type="FunFam" id="3.40.50.620:FF:000001">
    <property type="entry name" value="GMP synthase [glutamine-hydrolyzing]"/>
    <property type="match status" value="1"/>
</dbReference>
<dbReference type="FunFam" id="3.40.50.880:FF:000001">
    <property type="entry name" value="GMP synthase [glutamine-hydrolyzing]"/>
    <property type="match status" value="1"/>
</dbReference>
<dbReference type="Gene3D" id="3.30.300.10">
    <property type="match status" value="1"/>
</dbReference>
<dbReference type="Gene3D" id="3.40.50.880">
    <property type="match status" value="1"/>
</dbReference>
<dbReference type="Gene3D" id="3.40.50.620">
    <property type="entry name" value="HUPs"/>
    <property type="match status" value="1"/>
</dbReference>
<dbReference type="HAMAP" id="MF_00344">
    <property type="entry name" value="GMP_synthase"/>
    <property type="match status" value="1"/>
</dbReference>
<dbReference type="InterPro" id="IPR029062">
    <property type="entry name" value="Class_I_gatase-like"/>
</dbReference>
<dbReference type="InterPro" id="IPR017926">
    <property type="entry name" value="GATASE"/>
</dbReference>
<dbReference type="InterPro" id="IPR001674">
    <property type="entry name" value="GMP_synth_C"/>
</dbReference>
<dbReference type="InterPro" id="IPR004739">
    <property type="entry name" value="GMP_synth_GATase"/>
</dbReference>
<dbReference type="InterPro" id="IPR022955">
    <property type="entry name" value="GMP_synthase"/>
</dbReference>
<dbReference type="InterPro" id="IPR025777">
    <property type="entry name" value="GMPS_ATP_PPase_dom"/>
</dbReference>
<dbReference type="InterPro" id="IPR022310">
    <property type="entry name" value="NAD/GMP_synthase"/>
</dbReference>
<dbReference type="InterPro" id="IPR014729">
    <property type="entry name" value="Rossmann-like_a/b/a_fold"/>
</dbReference>
<dbReference type="NCBIfam" id="TIGR00884">
    <property type="entry name" value="guaA_Cterm"/>
    <property type="match status" value="1"/>
</dbReference>
<dbReference type="NCBIfam" id="TIGR00888">
    <property type="entry name" value="guaA_Nterm"/>
    <property type="match status" value="1"/>
</dbReference>
<dbReference type="NCBIfam" id="NF000848">
    <property type="entry name" value="PRK00074.1"/>
    <property type="match status" value="1"/>
</dbReference>
<dbReference type="PANTHER" id="PTHR11922:SF2">
    <property type="entry name" value="GMP SYNTHASE [GLUTAMINE-HYDROLYZING]"/>
    <property type="match status" value="1"/>
</dbReference>
<dbReference type="PANTHER" id="PTHR11922">
    <property type="entry name" value="GMP SYNTHASE-RELATED"/>
    <property type="match status" value="1"/>
</dbReference>
<dbReference type="Pfam" id="PF00117">
    <property type="entry name" value="GATase"/>
    <property type="match status" value="1"/>
</dbReference>
<dbReference type="Pfam" id="PF00958">
    <property type="entry name" value="GMP_synt_C"/>
    <property type="match status" value="1"/>
</dbReference>
<dbReference type="Pfam" id="PF02540">
    <property type="entry name" value="NAD_synthase"/>
    <property type="match status" value="1"/>
</dbReference>
<dbReference type="PRINTS" id="PR00097">
    <property type="entry name" value="ANTSNTHASEII"/>
</dbReference>
<dbReference type="PRINTS" id="PR00099">
    <property type="entry name" value="CPSGATASE"/>
</dbReference>
<dbReference type="PRINTS" id="PR00096">
    <property type="entry name" value="GATASE"/>
</dbReference>
<dbReference type="SUPFAM" id="SSF52402">
    <property type="entry name" value="Adenine nucleotide alpha hydrolases-like"/>
    <property type="match status" value="1"/>
</dbReference>
<dbReference type="SUPFAM" id="SSF52317">
    <property type="entry name" value="Class I glutamine amidotransferase-like"/>
    <property type="match status" value="1"/>
</dbReference>
<dbReference type="SUPFAM" id="SSF54810">
    <property type="entry name" value="GMP synthetase C-terminal dimerisation domain"/>
    <property type="match status" value="1"/>
</dbReference>
<dbReference type="PROSITE" id="PS51273">
    <property type="entry name" value="GATASE_TYPE_1"/>
    <property type="match status" value="1"/>
</dbReference>
<dbReference type="PROSITE" id="PS51553">
    <property type="entry name" value="GMPS_ATP_PPASE"/>
    <property type="match status" value="1"/>
</dbReference>
<name>GUAA_NITOC</name>
<organism>
    <name type="scientific">Nitrosococcus oceani (strain ATCC 19707 / BCRC 17464 / JCM 30415 / NCIMB 11848 / C-107)</name>
    <dbReference type="NCBI Taxonomy" id="323261"/>
    <lineage>
        <taxon>Bacteria</taxon>
        <taxon>Pseudomonadati</taxon>
        <taxon>Pseudomonadota</taxon>
        <taxon>Gammaproteobacteria</taxon>
        <taxon>Chromatiales</taxon>
        <taxon>Chromatiaceae</taxon>
        <taxon>Nitrosococcus</taxon>
    </lineage>
</organism>